<feature type="chain" id="PRO_0000228003" description="Transcription factor CP2">
    <location>
        <begin position="1"/>
        <end position="496"/>
    </location>
</feature>
<feature type="domain" description="Grh/CP2 DB" evidence="2">
    <location>
        <begin position="61"/>
        <end position="300"/>
    </location>
</feature>
<feature type="region of interest" description="DNA-binding" evidence="1">
    <location>
        <begin position="133"/>
        <end position="386"/>
    </location>
</feature>
<feature type="region of interest" description="Disordered" evidence="3">
    <location>
        <begin position="238"/>
        <end position="268"/>
    </location>
</feature>
<feature type="region of interest" description="Disordered" evidence="3">
    <location>
        <begin position="296"/>
        <end position="327"/>
    </location>
</feature>
<feature type="compositionally biased region" description="Basic and acidic residues" evidence="3">
    <location>
        <begin position="241"/>
        <end position="265"/>
    </location>
</feature>
<dbReference type="EMBL" id="AY298725">
    <property type="protein sequence ID" value="AAP56347.1"/>
    <property type="molecule type" value="mRNA"/>
</dbReference>
<dbReference type="RefSeq" id="NP_989715.1">
    <property type="nucleotide sequence ID" value="NM_204384.2"/>
</dbReference>
<dbReference type="SMR" id="Q7T2U9"/>
<dbReference type="FunCoup" id="Q7T2U9">
    <property type="interactions" value="1392"/>
</dbReference>
<dbReference type="STRING" id="9031.ENSGALP00000054348"/>
<dbReference type="PaxDb" id="9031-ENSGALP00000003492"/>
<dbReference type="Ensembl" id="ENSGALT00010058255.1">
    <property type="protein sequence ID" value="ENSGALP00010035386.1"/>
    <property type="gene ID" value="ENSGALG00010023911.1"/>
</dbReference>
<dbReference type="GeneID" id="378900"/>
<dbReference type="KEGG" id="gga:378900"/>
<dbReference type="CTD" id="7024"/>
<dbReference type="VEuPathDB" id="HostDB:geneid_378900"/>
<dbReference type="eggNOG" id="KOG4091">
    <property type="taxonomic scope" value="Eukaryota"/>
</dbReference>
<dbReference type="GeneTree" id="ENSGT00940000157629"/>
<dbReference type="HOGENOM" id="CLU_015127_2_0_1"/>
<dbReference type="InParanoid" id="Q7T2U9"/>
<dbReference type="OrthoDB" id="9996779at2759"/>
<dbReference type="PRO" id="PR:Q7T2U9"/>
<dbReference type="Proteomes" id="UP000000539">
    <property type="component" value="Chromosome 34"/>
</dbReference>
<dbReference type="GO" id="GO:0005829">
    <property type="term" value="C:cytosol"/>
    <property type="evidence" value="ECO:0007669"/>
    <property type="project" value="Ensembl"/>
</dbReference>
<dbReference type="GO" id="GO:0005654">
    <property type="term" value="C:nucleoplasm"/>
    <property type="evidence" value="ECO:0007669"/>
    <property type="project" value="Ensembl"/>
</dbReference>
<dbReference type="GO" id="GO:0005634">
    <property type="term" value="C:nucleus"/>
    <property type="evidence" value="ECO:0000318"/>
    <property type="project" value="GO_Central"/>
</dbReference>
<dbReference type="GO" id="GO:0032991">
    <property type="term" value="C:protein-containing complex"/>
    <property type="evidence" value="ECO:0007669"/>
    <property type="project" value="Ensembl"/>
</dbReference>
<dbReference type="GO" id="GO:0001228">
    <property type="term" value="F:DNA-binding transcription activator activity, RNA polymerase II-specific"/>
    <property type="evidence" value="ECO:0000318"/>
    <property type="project" value="GO_Central"/>
</dbReference>
<dbReference type="GO" id="GO:0000978">
    <property type="term" value="F:RNA polymerase II cis-regulatory region sequence-specific DNA binding"/>
    <property type="evidence" value="ECO:0000318"/>
    <property type="project" value="GO_Central"/>
</dbReference>
<dbReference type="GO" id="GO:0042789">
    <property type="term" value="P:mRNA transcription by RNA polymerase II"/>
    <property type="evidence" value="ECO:0007669"/>
    <property type="project" value="Ensembl"/>
</dbReference>
<dbReference type="GO" id="GO:0045944">
    <property type="term" value="P:positive regulation of transcription by RNA polymerase II"/>
    <property type="evidence" value="ECO:0000318"/>
    <property type="project" value="GO_Central"/>
</dbReference>
<dbReference type="FunFam" id="1.10.150.50:FF:000022">
    <property type="entry name" value="Transcription factor CP2 like 1"/>
    <property type="match status" value="1"/>
</dbReference>
<dbReference type="Gene3D" id="1.10.150.50">
    <property type="entry name" value="Transcription Factor, Ets-1"/>
    <property type="match status" value="1"/>
</dbReference>
<dbReference type="InterPro" id="IPR007604">
    <property type="entry name" value="CP2"/>
</dbReference>
<dbReference type="InterPro" id="IPR013761">
    <property type="entry name" value="SAM/pointed_sf"/>
</dbReference>
<dbReference type="InterPro" id="IPR041418">
    <property type="entry name" value="SAM_3"/>
</dbReference>
<dbReference type="InterPro" id="IPR040167">
    <property type="entry name" value="TF_CP2-like"/>
</dbReference>
<dbReference type="PANTHER" id="PTHR11037:SF11">
    <property type="entry name" value="ALPHA-GLOBIN TRANSCRIPTION FACTOR CP2"/>
    <property type="match status" value="1"/>
</dbReference>
<dbReference type="PANTHER" id="PTHR11037">
    <property type="entry name" value="TRANSCRIPTION FACTOR CP2"/>
    <property type="match status" value="1"/>
</dbReference>
<dbReference type="Pfam" id="PF04516">
    <property type="entry name" value="CP2"/>
    <property type="match status" value="1"/>
</dbReference>
<dbReference type="Pfam" id="PF25416">
    <property type="entry name" value="GRHL1_C"/>
    <property type="match status" value="1"/>
</dbReference>
<dbReference type="Pfam" id="PF18016">
    <property type="entry name" value="SAM_3"/>
    <property type="match status" value="1"/>
</dbReference>
<dbReference type="SUPFAM" id="SSF47769">
    <property type="entry name" value="SAM/Pointed domain"/>
    <property type="match status" value="1"/>
</dbReference>
<dbReference type="PROSITE" id="PS51968">
    <property type="entry name" value="GRH_CP2_DB"/>
    <property type="match status" value="1"/>
</dbReference>
<organism>
    <name type="scientific">Gallus gallus</name>
    <name type="common">Chicken</name>
    <dbReference type="NCBI Taxonomy" id="9031"/>
    <lineage>
        <taxon>Eukaryota</taxon>
        <taxon>Metazoa</taxon>
        <taxon>Chordata</taxon>
        <taxon>Craniata</taxon>
        <taxon>Vertebrata</taxon>
        <taxon>Euteleostomi</taxon>
        <taxon>Archelosauria</taxon>
        <taxon>Archosauria</taxon>
        <taxon>Dinosauria</taxon>
        <taxon>Saurischia</taxon>
        <taxon>Theropoda</taxon>
        <taxon>Coelurosauria</taxon>
        <taxon>Aves</taxon>
        <taxon>Neognathae</taxon>
        <taxon>Galloanserae</taxon>
        <taxon>Galliformes</taxon>
        <taxon>Phasianidae</taxon>
        <taxon>Phasianinae</taxon>
        <taxon>Gallus</taxon>
    </lineage>
</organism>
<comment type="function">
    <text evidence="4">Binds the B-response element 5'-CAAGTCCAGGCAAGT-3' of the ENS1/ERNI promoter. May be the major transcription activator thus being essential for its expression.</text>
</comment>
<comment type="subunit">
    <text evidence="1">Component of the SSP (stage selector protein) complex, which appears to be a heteromer of TFCP2 and 2 copies of NFE4.</text>
</comment>
<comment type="subcellular location">
    <subcellularLocation>
        <location evidence="1">Nucleus</location>
    </subcellularLocation>
</comment>
<comment type="tissue specificity">
    <text evidence="4">Expressed in the epiblast at the pre-primitive streak stage. At the primitive streak stage, expressed in the extending primitive streak and in the prospective neural plate. At stages 7 and 8, expressed in the neural folds, somites and in the regressing primitive streak. At stage 12, ubiquitously expressed in the whole embryo.</text>
</comment>
<comment type="similarity">
    <text evidence="5">Belongs to the grh/CP2 family. CP2 subfamily.</text>
</comment>
<sequence length="496" mass="56473">MAWALKLPLADEVIESGLVQDFDASLSGIGQELGAGAYSMSDVLALPIFKQEESSLPPENENKILPFQYVLCAATSPAVKLHDETLTYLNQGQSYEIRMLDNRKIGELPEINGKLVKSIFRVVFHDRRLQYTEHQQLEGWRWNRPGDRILDIDIPMSVGIIDPRANPTQLNTVEFLWDPSKRTSVFIQVHCISTEFTMRKHGGEKGVPFRVQIDTFKENENGEYTEHLHSASCQIKVFKPKGADRKQKTDREKMEKRTPHEKEKYQPSYETTILTECSPWPEITYVNNAPSPGFNSSHSSFSIGEGNGSPNHQPEPPPPIADNLLPTSTPQEAQQWLHRNRFSTFSRLFRNFSGADLLKLTREDVIQICGPADGIRLFNALKGRMVRPRLTIYVCQESQQLQELQQKHEDGDAVTSTFFVYHAIYLEELTAVELTEKLAQLFSISSQQISQIYKQGPTGIHVLISDEMIQNFQDESCFVLDTMKAETNDSYHIILK</sequence>
<name>TFCP2_CHICK</name>
<gene>
    <name type="primary">TFCP2</name>
</gene>
<keyword id="KW-0238">DNA-binding</keyword>
<keyword id="KW-0539">Nucleus</keyword>
<keyword id="KW-1185">Reference proteome</keyword>
<keyword id="KW-0804">Transcription</keyword>
<keyword id="KW-0805">Transcription regulation</keyword>
<evidence type="ECO:0000250" key="1"/>
<evidence type="ECO:0000255" key="2">
    <source>
        <dbReference type="PROSITE-ProRule" id="PRU01313"/>
    </source>
</evidence>
<evidence type="ECO:0000256" key="3">
    <source>
        <dbReference type="SAM" id="MobiDB-lite"/>
    </source>
</evidence>
<evidence type="ECO:0000269" key="4">
    <source>
    </source>
</evidence>
<evidence type="ECO:0000305" key="5"/>
<reference key="1">
    <citation type="journal article" date="2004" name="Nucleic Acids Res.">
        <title>Transcription factor cCP2 controls gene expression in chicken embryonic stem cells.</title>
        <authorList>
            <person name="Acloque H."/>
            <person name="Mey A."/>
            <person name="Birot A.-M."/>
            <person name="Gruffat H."/>
            <person name="Pain B."/>
            <person name="Samarut J."/>
        </authorList>
    </citation>
    <scope>NUCLEOTIDE SEQUENCE [MRNA]</scope>
    <scope>FUNCTION</scope>
    <scope>TISSUE SPECIFICITY</scope>
</reference>
<proteinExistence type="evidence at transcript level"/>
<accession>Q7T2U9</accession>
<protein>
    <recommendedName>
        <fullName>Transcription factor CP2</fullName>
    </recommendedName>
</protein>